<protein>
    <recommendedName>
        <fullName evidence="1">Small ribosomal subunit protein bS21</fullName>
    </recommendedName>
    <alternativeName>
        <fullName evidence="3">30S ribosomal protein S21</fullName>
    </alternativeName>
</protein>
<dbReference type="EMBL" id="AE005672">
    <property type="protein sequence ID" value="AAK75512.1"/>
    <property type="molecule type" value="Genomic_DNA"/>
</dbReference>
<dbReference type="PIR" id="G95164">
    <property type="entry name" value="G95164"/>
</dbReference>
<dbReference type="RefSeq" id="WP_000048055.1">
    <property type="nucleotide sequence ID" value="NZ_CP155539.1"/>
</dbReference>
<dbReference type="SMR" id="P66524"/>
<dbReference type="PaxDb" id="170187-SP_1414"/>
<dbReference type="EnsemblBacteria" id="AAK75512">
    <property type="protein sequence ID" value="AAK75512"/>
    <property type="gene ID" value="SP_1414"/>
</dbReference>
<dbReference type="GeneID" id="45653328"/>
<dbReference type="KEGG" id="spn:SP_1414"/>
<dbReference type="eggNOG" id="COG0828">
    <property type="taxonomic scope" value="Bacteria"/>
</dbReference>
<dbReference type="PhylomeDB" id="P66524"/>
<dbReference type="BioCyc" id="SPNE170187:G1FZB-1422-MONOMER"/>
<dbReference type="Proteomes" id="UP000000585">
    <property type="component" value="Chromosome"/>
</dbReference>
<dbReference type="GO" id="GO:1990904">
    <property type="term" value="C:ribonucleoprotein complex"/>
    <property type="evidence" value="ECO:0007669"/>
    <property type="project" value="UniProtKB-KW"/>
</dbReference>
<dbReference type="GO" id="GO:0005840">
    <property type="term" value="C:ribosome"/>
    <property type="evidence" value="ECO:0007669"/>
    <property type="project" value="UniProtKB-KW"/>
</dbReference>
<dbReference type="GO" id="GO:0003735">
    <property type="term" value="F:structural constituent of ribosome"/>
    <property type="evidence" value="ECO:0007669"/>
    <property type="project" value="InterPro"/>
</dbReference>
<dbReference type="GO" id="GO:0006412">
    <property type="term" value="P:translation"/>
    <property type="evidence" value="ECO:0007669"/>
    <property type="project" value="UniProtKB-UniRule"/>
</dbReference>
<dbReference type="Gene3D" id="1.20.5.1150">
    <property type="entry name" value="Ribosomal protein S8"/>
    <property type="match status" value="1"/>
</dbReference>
<dbReference type="HAMAP" id="MF_00358">
    <property type="entry name" value="Ribosomal_bS21"/>
    <property type="match status" value="1"/>
</dbReference>
<dbReference type="InterPro" id="IPR001911">
    <property type="entry name" value="Ribosomal_bS21"/>
</dbReference>
<dbReference type="InterPro" id="IPR018278">
    <property type="entry name" value="Ribosomal_bS21_CS"/>
</dbReference>
<dbReference type="InterPro" id="IPR038380">
    <property type="entry name" value="Ribosomal_bS21_sf"/>
</dbReference>
<dbReference type="NCBIfam" id="TIGR00030">
    <property type="entry name" value="S21p"/>
    <property type="match status" value="1"/>
</dbReference>
<dbReference type="PANTHER" id="PTHR21109">
    <property type="entry name" value="MITOCHONDRIAL 28S RIBOSOMAL PROTEIN S21"/>
    <property type="match status" value="1"/>
</dbReference>
<dbReference type="PANTHER" id="PTHR21109:SF22">
    <property type="entry name" value="SMALL RIBOSOMAL SUBUNIT PROTEIN BS21"/>
    <property type="match status" value="1"/>
</dbReference>
<dbReference type="Pfam" id="PF01165">
    <property type="entry name" value="Ribosomal_S21"/>
    <property type="match status" value="1"/>
</dbReference>
<dbReference type="PRINTS" id="PR00976">
    <property type="entry name" value="RIBOSOMALS21"/>
</dbReference>
<dbReference type="PROSITE" id="PS01181">
    <property type="entry name" value="RIBOSOMAL_S21"/>
    <property type="match status" value="1"/>
</dbReference>
<organism>
    <name type="scientific">Streptococcus pneumoniae serotype 4 (strain ATCC BAA-334 / TIGR4)</name>
    <dbReference type="NCBI Taxonomy" id="170187"/>
    <lineage>
        <taxon>Bacteria</taxon>
        <taxon>Bacillati</taxon>
        <taxon>Bacillota</taxon>
        <taxon>Bacilli</taxon>
        <taxon>Lactobacillales</taxon>
        <taxon>Streptococcaceae</taxon>
        <taxon>Streptococcus</taxon>
    </lineage>
</organism>
<sequence length="58" mass="6998">MSKTVVRKNESLDDALRRFKRAVTKAGTLQETRKREFYEKPSVKRKRKSEVARKRKKF</sequence>
<comment type="similarity">
    <text evidence="1">Belongs to the bacterial ribosomal protein bS21 family.</text>
</comment>
<feature type="chain" id="PRO_0000178381" description="Small ribosomal subunit protein bS21">
    <location>
        <begin position="1"/>
        <end position="58"/>
    </location>
</feature>
<feature type="region of interest" description="Disordered" evidence="2">
    <location>
        <begin position="39"/>
        <end position="58"/>
    </location>
</feature>
<feature type="compositionally biased region" description="Basic residues" evidence="2">
    <location>
        <begin position="43"/>
        <end position="58"/>
    </location>
</feature>
<evidence type="ECO:0000255" key="1">
    <source>
        <dbReference type="HAMAP-Rule" id="MF_00358"/>
    </source>
</evidence>
<evidence type="ECO:0000256" key="2">
    <source>
        <dbReference type="SAM" id="MobiDB-lite"/>
    </source>
</evidence>
<evidence type="ECO:0000305" key="3"/>
<keyword id="KW-1185">Reference proteome</keyword>
<keyword id="KW-0687">Ribonucleoprotein</keyword>
<keyword id="KW-0689">Ribosomal protein</keyword>
<proteinExistence type="inferred from homology"/>
<accession>P66524</accession>
<accession>Q97Q17</accession>
<gene>
    <name evidence="1" type="primary">rpsU</name>
    <name type="ordered locus">SP_1414</name>
</gene>
<name>RS21_STRPN</name>
<reference key="1">
    <citation type="journal article" date="2001" name="Science">
        <title>Complete genome sequence of a virulent isolate of Streptococcus pneumoniae.</title>
        <authorList>
            <person name="Tettelin H."/>
            <person name="Nelson K.E."/>
            <person name="Paulsen I.T."/>
            <person name="Eisen J.A."/>
            <person name="Read T.D."/>
            <person name="Peterson S.N."/>
            <person name="Heidelberg J.F."/>
            <person name="DeBoy R.T."/>
            <person name="Haft D.H."/>
            <person name="Dodson R.J."/>
            <person name="Durkin A.S."/>
            <person name="Gwinn M.L."/>
            <person name="Kolonay J.F."/>
            <person name="Nelson W.C."/>
            <person name="Peterson J.D."/>
            <person name="Umayam L.A."/>
            <person name="White O."/>
            <person name="Salzberg S.L."/>
            <person name="Lewis M.R."/>
            <person name="Radune D."/>
            <person name="Holtzapple E.K."/>
            <person name="Khouri H.M."/>
            <person name="Wolf A.M."/>
            <person name="Utterback T.R."/>
            <person name="Hansen C.L."/>
            <person name="McDonald L.A."/>
            <person name="Feldblyum T.V."/>
            <person name="Angiuoli S.V."/>
            <person name="Dickinson T."/>
            <person name="Hickey E.K."/>
            <person name="Holt I.E."/>
            <person name="Loftus B.J."/>
            <person name="Yang F."/>
            <person name="Smith H.O."/>
            <person name="Venter J.C."/>
            <person name="Dougherty B.A."/>
            <person name="Morrison D.A."/>
            <person name="Hollingshead S.K."/>
            <person name="Fraser C.M."/>
        </authorList>
    </citation>
    <scope>NUCLEOTIDE SEQUENCE [LARGE SCALE GENOMIC DNA]</scope>
    <source>
        <strain>ATCC BAA-334 / TIGR4</strain>
    </source>
</reference>